<dbReference type="EC" id="3.6.5.3" evidence="2"/>
<dbReference type="EMBL" id="DQ630521">
    <property type="protein sequence ID" value="ABF60202.1"/>
    <property type="molecule type" value="Genomic_DNA"/>
</dbReference>
<dbReference type="RefSeq" id="YP_764393.1">
    <property type="nucleotide sequence ID" value="NC_008372.1"/>
</dbReference>
<dbReference type="SMR" id="Q06SH3"/>
<dbReference type="GeneID" id="4308433"/>
<dbReference type="GO" id="GO:0009507">
    <property type="term" value="C:chloroplast"/>
    <property type="evidence" value="ECO:0007669"/>
    <property type="project" value="UniProtKB-SubCell"/>
</dbReference>
<dbReference type="GO" id="GO:0005739">
    <property type="term" value="C:mitochondrion"/>
    <property type="evidence" value="ECO:0007669"/>
    <property type="project" value="TreeGrafter"/>
</dbReference>
<dbReference type="GO" id="GO:0005525">
    <property type="term" value="F:GTP binding"/>
    <property type="evidence" value="ECO:0007669"/>
    <property type="project" value="UniProtKB-UniRule"/>
</dbReference>
<dbReference type="GO" id="GO:0003924">
    <property type="term" value="F:GTPase activity"/>
    <property type="evidence" value="ECO:0007669"/>
    <property type="project" value="InterPro"/>
</dbReference>
<dbReference type="GO" id="GO:0003746">
    <property type="term" value="F:translation elongation factor activity"/>
    <property type="evidence" value="ECO:0007669"/>
    <property type="project" value="UniProtKB-UniRule"/>
</dbReference>
<dbReference type="GO" id="GO:0070125">
    <property type="term" value="P:mitochondrial translational elongation"/>
    <property type="evidence" value="ECO:0007669"/>
    <property type="project" value="TreeGrafter"/>
</dbReference>
<dbReference type="CDD" id="cd01884">
    <property type="entry name" value="EF_Tu"/>
    <property type="match status" value="1"/>
</dbReference>
<dbReference type="CDD" id="cd03697">
    <property type="entry name" value="EFTU_II"/>
    <property type="match status" value="1"/>
</dbReference>
<dbReference type="CDD" id="cd03707">
    <property type="entry name" value="EFTU_III"/>
    <property type="match status" value="1"/>
</dbReference>
<dbReference type="FunFam" id="2.40.30.10:FF:000001">
    <property type="entry name" value="Elongation factor Tu"/>
    <property type="match status" value="1"/>
</dbReference>
<dbReference type="FunFam" id="3.40.50.300:FF:000003">
    <property type="entry name" value="Elongation factor Tu"/>
    <property type="match status" value="1"/>
</dbReference>
<dbReference type="Gene3D" id="3.40.50.300">
    <property type="entry name" value="P-loop containing nucleotide triphosphate hydrolases"/>
    <property type="match status" value="1"/>
</dbReference>
<dbReference type="Gene3D" id="2.40.30.10">
    <property type="entry name" value="Translation factors"/>
    <property type="match status" value="2"/>
</dbReference>
<dbReference type="HAMAP" id="MF_00118_B">
    <property type="entry name" value="EF_Tu_B"/>
    <property type="match status" value="1"/>
</dbReference>
<dbReference type="InterPro" id="IPR041709">
    <property type="entry name" value="EF-Tu_GTP-bd"/>
</dbReference>
<dbReference type="InterPro" id="IPR050055">
    <property type="entry name" value="EF-Tu_GTPase"/>
</dbReference>
<dbReference type="InterPro" id="IPR004161">
    <property type="entry name" value="EFTu-like_2"/>
</dbReference>
<dbReference type="InterPro" id="IPR033720">
    <property type="entry name" value="EFTU_2"/>
</dbReference>
<dbReference type="InterPro" id="IPR031157">
    <property type="entry name" value="G_TR_CS"/>
</dbReference>
<dbReference type="InterPro" id="IPR027417">
    <property type="entry name" value="P-loop_NTPase"/>
</dbReference>
<dbReference type="InterPro" id="IPR005225">
    <property type="entry name" value="Small_GTP-bd"/>
</dbReference>
<dbReference type="InterPro" id="IPR000795">
    <property type="entry name" value="T_Tr_GTP-bd_dom"/>
</dbReference>
<dbReference type="InterPro" id="IPR009000">
    <property type="entry name" value="Transl_B-barrel_sf"/>
</dbReference>
<dbReference type="InterPro" id="IPR009001">
    <property type="entry name" value="Transl_elong_EF1A/Init_IF2_C"/>
</dbReference>
<dbReference type="InterPro" id="IPR004541">
    <property type="entry name" value="Transl_elong_EFTu/EF1A_bac/org"/>
</dbReference>
<dbReference type="InterPro" id="IPR004160">
    <property type="entry name" value="Transl_elong_EFTu/EF1A_C"/>
</dbReference>
<dbReference type="NCBIfam" id="TIGR00485">
    <property type="entry name" value="EF-Tu"/>
    <property type="match status" value="1"/>
</dbReference>
<dbReference type="NCBIfam" id="NF000766">
    <property type="entry name" value="PRK00049.1"/>
    <property type="match status" value="1"/>
</dbReference>
<dbReference type="NCBIfam" id="NF009372">
    <property type="entry name" value="PRK12735.1"/>
    <property type="match status" value="1"/>
</dbReference>
<dbReference type="NCBIfam" id="NF009373">
    <property type="entry name" value="PRK12736.1"/>
    <property type="match status" value="1"/>
</dbReference>
<dbReference type="NCBIfam" id="TIGR00231">
    <property type="entry name" value="small_GTP"/>
    <property type="match status" value="1"/>
</dbReference>
<dbReference type="PANTHER" id="PTHR43721:SF5">
    <property type="entry name" value="ELONGATION FACTOR TU, CHLOROPLASTIC"/>
    <property type="match status" value="1"/>
</dbReference>
<dbReference type="PANTHER" id="PTHR43721">
    <property type="entry name" value="ELONGATION FACTOR TU-RELATED"/>
    <property type="match status" value="1"/>
</dbReference>
<dbReference type="Pfam" id="PF00009">
    <property type="entry name" value="GTP_EFTU"/>
    <property type="match status" value="1"/>
</dbReference>
<dbReference type="Pfam" id="PF03144">
    <property type="entry name" value="GTP_EFTU_D2"/>
    <property type="match status" value="1"/>
</dbReference>
<dbReference type="Pfam" id="PF03143">
    <property type="entry name" value="GTP_EFTU_D3"/>
    <property type="match status" value="1"/>
</dbReference>
<dbReference type="PRINTS" id="PR00315">
    <property type="entry name" value="ELONGATNFCT"/>
</dbReference>
<dbReference type="SUPFAM" id="SSF50465">
    <property type="entry name" value="EF-Tu/eEF-1alpha/eIF2-gamma C-terminal domain"/>
    <property type="match status" value="1"/>
</dbReference>
<dbReference type="SUPFAM" id="SSF52540">
    <property type="entry name" value="P-loop containing nucleoside triphosphate hydrolases"/>
    <property type="match status" value="1"/>
</dbReference>
<dbReference type="SUPFAM" id="SSF50447">
    <property type="entry name" value="Translation proteins"/>
    <property type="match status" value="1"/>
</dbReference>
<dbReference type="PROSITE" id="PS00301">
    <property type="entry name" value="G_TR_1"/>
    <property type="match status" value="1"/>
</dbReference>
<dbReference type="PROSITE" id="PS51722">
    <property type="entry name" value="G_TR_2"/>
    <property type="match status" value="1"/>
</dbReference>
<name>EFTU_STIHE</name>
<accession>Q06SH3</accession>
<protein>
    <recommendedName>
        <fullName>Elongation factor Tu, chloroplastic</fullName>
        <shortName>EF-Tu</shortName>
        <ecNumber evidence="2">3.6.5.3</ecNumber>
    </recommendedName>
</protein>
<reference key="1">
    <citation type="journal article" date="2006" name="Mol. Genet. Genomics">
        <title>Distinctive architecture of the chloroplast genome in the chlorophycean green alga Stigeoclonium helveticum.</title>
        <authorList>
            <person name="Belanger A.-S."/>
            <person name="Brouard J.-S."/>
            <person name="Charlebois P."/>
            <person name="Otis C."/>
            <person name="Lemieux C."/>
            <person name="Turmel M."/>
        </authorList>
    </citation>
    <scope>NUCLEOTIDE SEQUENCE [LARGE SCALE GENOMIC DNA]</scope>
    <source>
        <strain>UTEX 441</strain>
    </source>
</reference>
<evidence type="ECO:0000250" key="1"/>
<evidence type="ECO:0000255" key="2">
    <source>
        <dbReference type="HAMAP-Rule" id="MF_00118"/>
    </source>
</evidence>
<evidence type="ECO:0000305" key="3"/>
<keyword id="KW-0150">Chloroplast</keyword>
<keyword id="KW-0251">Elongation factor</keyword>
<keyword id="KW-0342">GTP-binding</keyword>
<keyword id="KW-0378">Hydrolase</keyword>
<keyword id="KW-0460">Magnesium</keyword>
<keyword id="KW-0479">Metal-binding</keyword>
<keyword id="KW-0547">Nucleotide-binding</keyword>
<keyword id="KW-0934">Plastid</keyword>
<keyword id="KW-0648">Protein biosynthesis</keyword>
<proteinExistence type="inferred from homology"/>
<organism>
    <name type="scientific">Stigeoclonium helveticum</name>
    <name type="common">Green alga</name>
    <dbReference type="NCBI Taxonomy" id="55999"/>
    <lineage>
        <taxon>Eukaryota</taxon>
        <taxon>Viridiplantae</taxon>
        <taxon>Chlorophyta</taxon>
        <taxon>core chlorophytes</taxon>
        <taxon>Chlorophyceae</taxon>
        <taxon>OCC clade</taxon>
        <taxon>Chaetophorales</taxon>
        <taxon>Chaetophoraceae</taxon>
        <taxon>Stigeoclonium</taxon>
    </lineage>
</organism>
<comment type="function">
    <text evidence="2">GTP hydrolase that promotes the GTP-dependent binding of aminoacyl-tRNA to the A-site of ribosomes during protein biosynthesis.</text>
</comment>
<comment type="catalytic activity">
    <reaction evidence="2">
        <text>GTP + H2O = GDP + phosphate + H(+)</text>
        <dbReference type="Rhea" id="RHEA:19669"/>
        <dbReference type="ChEBI" id="CHEBI:15377"/>
        <dbReference type="ChEBI" id="CHEBI:15378"/>
        <dbReference type="ChEBI" id="CHEBI:37565"/>
        <dbReference type="ChEBI" id="CHEBI:43474"/>
        <dbReference type="ChEBI" id="CHEBI:58189"/>
        <dbReference type="EC" id="3.6.5.3"/>
    </reaction>
    <physiologicalReaction direction="left-to-right" evidence="2">
        <dbReference type="Rhea" id="RHEA:19670"/>
    </physiologicalReaction>
</comment>
<comment type="subcellular location">
    <subcellularLocation>
        <location>Plastid</location>
        <location>Chloroplast</location>
    </subcellularLocation>
</comment>
<comment type="similarity">
    <text evidence="3">Belongs to the TRAFAC class translation factor GTPase superfamily. Classic translation factor GTPase family. EF-Tu/EF-1A subfamily.</text>
</comment>
<geneLocation type="chloroplast"/>
<sequence length="419" mass="45800">MARAKFERKKPHVNIGTIGHVDHGKTTLTAAITMALAARGGATGRKYDEIDSAPEEKARGITINAAHVEYETENRHYAHVDCPGHADYVKNMITGAAQMDGAILVVSGADGPMPQTTEHVLLAKQVGVPAIVVFLNKADQVDDPELLELVELEVRDILDKYGFASDEVQILSGSALLALEALVENPNIKPGDSEWVDKIYNLMATVDEHIPTPKREMDKPFLLAVEDVFSITGRGTVATGRVERGTLKVNETVEIIGLRDTKTTTVTAIEMFQKTLDETIAGDNVGILLRGVQKKDIERGMVIAKPGTILPHTLFEGQVYVLTAEEGGRKSGFFKGYQPQFYVRTTDVTGKILDFSYIKQRNPSELSTMHSNPMVCPGDYVNMKIQLITPIAIEKGMRFAIREGGRTVGAGMVLEILES</sequence>
<gene>
    <name type="primary">tufA</name>
</gene>
<feature type="chain" id="PRO_0000275381" description="Elongation factor Tu, chloroplastic">
    <location>
        <begin position="1"/>
        <end position="419"/>
    </location>
</feature>
<feature type="domain" description="tr-type G">
    <location>
        <begin position="10"/>
        <end position="214"/>
    </location>
</feature>
<feature type="region of interest" description="G1" evidence="1">
    <location>
        <begin position="19"/>
        <end position="26"/>
    </location>
</feature>
<feature type="region of interest" description="G2" evidence="1">
    <location>
        <begin position="60"/>
        <end position="64"/>
    </location>
</feature>
<feature type="region of interest" description="G3" evidence="1">
    <location>
        <begin position="81"/>
        <end position="84"/>
    </location>
</feature>
<feature type="region of interest" description="G4" evidence="1">
    <location>
        <begin position="136"/>
        <end position="139"/>
    </location>
</feature>
<feature type="region of interest" description="G5" evidence="1">
    <location>
        <begin position="174"/>
        <end position="176"/>
    </location>
</feature>
<feature type="binding site" evidence="1">
    <location>
        <begin position="19"/>
        <end position="26"/>
    </location>
    <ligand>
        <name>GTP</name>
        <dbReference type="ChEBI" id="CHEBI:37565"/>
    </ligand>
</feature>
<feature type="binding site" evidence="2">
    <location>
        <position position="26"/>
    </location>
    <ligand>
        <name>Mg(2+)</name>
        <dbReference type="ChEBI" id="CHEBI:18420"/>
    </ligand>
</feature>
<feature type="binding site" evidence="1">
    <location>
        <begin position="81"/>
        <end position="85"/>
    </location>
    <ligand>
        <name>GTP</name>
        <dbReference type="ChEBI" id="CHEBI:37565"/>
    </ligand>
</feature>
<feature type="binding site" evidence="1">
    <location>
        <begin position="136"/>
        <end position="139"/>
    </location>
    <ligand>
        <name>GTP</name>
        <dbReference type="ChEBI" id="CHEBI:37565"/>
    </ligand>
</feature>